<gene>
    <name evidence="1" type="primary">gcvT</name>
    <name type="ordered locus">Acid345_2461</name>
</gene>
<dbReference type="EC" id="2.1.2.10" evidence="1"/>
<dbReference type="EMBL" id="CP000360">
    <property type="protein sequence ID" value="ABF41462.1"/>
    <property type="molecule type" value="Genomic_DNA"/>
</dbReference>
<dbReference type="RefSeq" id="WP_011523263.1">
    <property type="nucleotide sequence ID" value="NC_008009.1"/>
</dbReference>
<dbReference type="SMR" id="Q1INT8"/>
<dbReference type="STRING" id="204669.Acid345_2461"/>
<dbReference type="EnsemblBacteria" id="ABF41462">
    <property type="protein sequence ID" value="ABF41462"/>
    <property type="gene ID" value="Acid345_2461"/>
</dbReference>
<dbReference type="KEGG" id="aba:Acid345_2461"/>
<dbReference type="eggNOG" id="COG0404">
    <property type="taxonomic scope" value="Bacteria"/>
</dbReference>
<dbReference type="HOGENOM" id="CLU_007884_10_2_0"/>
<dbReference type="OrthoDB" id="9774591at2"/>
<dbReference type="Proteomes" id="UP000002432">
    <property type="component" value="Chromosome"/>
</dbReference>
<dbReference type="GO" id="GO:0005829">
    <property type="term" value="C:cytosol"/>
    <property type="evidence" value="ECO:0007669"/>
    <property type="project" value="TreeGrafter"/>
</dbReference>
<dbReference type="GO" id="GO:0005960">
    <property type="term" value="C:glycine cleavage complex"/>
    <property type="evidence" value="ECO:0007669"/>
    <property type="project" value="InterPro"/>
</dbReference>
<dbReference type="GO" id="GO:0004047">
    <property type="term" value="F:aminomethyltransferase activity"/>
    <property type="evidence" value="ECO:0007669"/>
    <property type="project" value="UniProtKB-UniRule"/>
</dbReference>
<dbReference type="GO" id="GO:0008483">
    <property type="term" value="F:transaminase activity"/>
    <property type="evidence" value="ECO:0007669"/>
    <property type="project" value="UniProtKB-KW"/>
</dbReference>
<dbReference type="GO" id="GO:0019464">
    <property type="term" value="P:glycine decarboxylation via glycine cleavage system"/>
    <property type="evidence" value="ECO:0007669"/>
    <property type="project" value="UniProtKB-UniRule"/>
</dbReference>
<dbReference type="FunFam" id="2.40.30.110:FF:000003">
    <property type="entry name" value="Aminomethyltransferase"/>
    <property type="match status" value="1"/>
</dbReference>
<dbReference type="FunFam" id="3.30.70.1400:FF:000001">
    <property type="entry name" value="Aminomethyltransferase"/>
    <property type="match status" value="1"/>
</dbReference>
<dbReference type="Gene3D" id="2.40.30.110">
    <property type="entry name" value="Aminomethyltransferase beta-barrel domains"/>
    <property type="match status" value="1"/>
</dbReference>
<dbReference type="Gene3D" id="3.30.70.1400">
    <property type="entry name" value="Aminomethyltransferase beta-barrel domains"/>
    <property type="match status" value="1"/>
</dbReference>
<dbReference type="Gene3D" id="4.10.1250.10">
    <property type="entry name" value="Aminomethyltransferase fragment"/>
    <property type="match status" value="1"/>
</dbReference>
<dbReference type="Gene3D" id="3.30.1360.120">
    <property type="entry name" value="Probable tRNA modification gtpase trme, domain 1"/>
    <property type="match status" value="1"/>
</dbReference>
<dbReference type="HAMAP" id="MF_00259">
    <property type="entry name" value="GcvT"/>
    <property type="match status" value="1"/>
</dbReference>
<dbReference type="InterPro" id="IPR006223">
    <property type="entry name" value="GCS_T"/>
</dbReference>
<dbReference type="InterPro" id="IPR022903">
    <property type="entry name" value="GCS_T_bac"/>
</dbReference>
<dbReference type="InterPro" id="IPR013977">
    <property type="entry name" value="GCST_C"/>
</dbReference>
<dbReference type="InterPro" id="IPR006222">
    <property type="entry name" value="GCV_T_N"/>
</dbReference>
<dbReference type="InterPro" id="IPR028896">
    <property type="entry name" value="GcvT/YgfZ/DmdA"/>
</dbReference>
<dbReference type="InterPro" id="IPR029043">
    <property type="entry name" value="GcvT/YgfZ_C"/>
</dbReference>
<dbReference type="InterPro" id="IPR027266">
    <property type="entry name" value="TrmE/GcvT_dom1"/>
</dbReference>
<dbReference type="NCBIfam" id="TIGR00528">
    <property type="entry name" value="gcvT"/>
    <property type="match status" value="1"/>
</dbReference>
<dbReference type="NCBIfam" id="NF001567">
    <property type="entry name" value="PRK00389.1"/>
    <property type="match status" value="1"/>
</dbReference>
<dbReference type="PANTHER" id="PTHR43757">
    <property type="entry name" value="AMINOMETHYLTRANSFERASE"/>
    <property type="match status" value="1"/>
</dbReference>
<dbReference type="PANTHER" id="PTHR43757:SF2">
    <property type="entry name" value="AMINOMETHYLTRANSFERASE, MITOCHONDRIAL"/>
    <property type="match status" value="1"/>
</dbReference>
<dbReference type="Pfam" id="PF01571">
    <property type="entry name" value="GCV_T"/>
    <property type="match status" value="1"/>
</dbReference>
<dbReference type="Pfam" id="PF08669">
    <property type="entry name" value="GCV_T_C"/>
    <property type="match status" value="1"/>
</dbReference>
<dbReference type="PIRSF" id="PIRSF006487">
    <property type="entry name" value="GcvT"/>
    <property type="match status" value="1"/>
</dbReference>
<dbReference type="SUPFAM" id="SSF101790">
    <property type="entry name" value="Aminomethyltransferase beta-barrel domain"/>
    <property type="match status" value="1"/>
</dbReference>
<dbReference type="SUPFAM" id="SSF103025">
    <property type="entry name" value="Folate-binding domain"/>
    <property type="match status" value="1"/>
</dbReference>
<name>GCST_KORVE</name>
<comment type="function">
    <text evidence="1">The glycine cleavage system catalyzes the degradation of glycine.</text>
</comment>
<comment type="catalytic activity">
    <reaction evidence="1">
        <text>N(6)-[(R)-S(8)-aminomethyldihydrolipoyl]-L-lysyl-[protein] + (6S)-5,6,7,8-tetrahydrofolate = N(6)-[(R)-dihydrolipoyl]-L-lysyl-[protein] + (6R)-5,10-methylene-5,6,7,8-tetrahydrofolate + NH4(+)</text>
        <dbReference type="Rhea" id="RHEA:16945"/>
        <dbReference type="Rhea" id="RHEA-COMP:10475"/>
        <dbReference type="Rhea" id="RHEA-COMP:10492"/>
        <dbReference type="ChEBI" id="CHEBI:15636"/>
        <dbReference type="ChEBI" id="CHEBI:28938"/>
        <dbReference type="ChEBI" id="CHEBI:57453"/>
        <dbReference type="ChEBI" id="CHEBI:83100"/>
        <dbReference type="ChEBI" id="CHEBI:83143"/>
        <dbReference type="EC" id="2.1.2.10"/>
    </reaction>
</comment>
<comment type="subunit">
    <text evidence="1">The glycine cleavage system is composed of four proteins: P, T, L and H.</text>
</comment>
<comment type="similarity">
    <text evidence="1">Belongs to the GcvT family.</text>
</comment>
<reference key="1">
    <citation type="journal article" date="2009" name="Appl. Environ. Microbiol.">
        <title>Three genomes from the phylum Acidobacteria provide insight into the lifestyles of these microorganisms in soils.</title>
        <authorList>
            <person name="Ward N.L."/>
            <person name="Challacombe J.F."/>
            <person name="Janssen P.H."/>
            <person name="Henrissat B."/>
            <person name="Coutinho P.M."/>
            <person name="Wu M."/>
            <person name="Xie G."/>
            <person name="Haft D.H."/>
            <person name="Sait M."/>
            <person name="Badger J."/>
            <person name="Barabote R.D."/>
            <person name="Bradley B."/>
            <person name="Brettin T.S."/>
            <person name="Brinkac L.M."/>
            <person name="Bruce D."/>
            <person name="Creasy T."/>
            <person name="Daugherty S.C."/>
            <person name="Davidsen T.M."/>
            <person name="DeBoy R.T."/>
            <person name="Detter J.C."/>
            <person name="Dodson R.J."/>
            <person name="Durkin A.S."/>
            <person name="Ganapathy A."/>
            <person name="Gwinn-Giglio M."/>
            <person name="Han C.S."/>
            <person name="Khouri H."/>
            <person name="Kiss H."/>
            <person name="Kothari S.P."/>
            <person name="Madupu R."/>
            <person name="Nelson K.E."/>
            <person name="Nelson W.C."/>
            <person name="Paulsen I."/>
            <person name="Penn K."/>
            <person name="Ren Q."/>
            <person name="Rosovitz M.J."/>
            <person name="Selengut J.D."/>
            <person name="Shrivastava S."/>
            <person name="Sullivan S.A."/>
            <person name="Tapia R."/>
            <person name="Thompson L.S."/>
            <person name="Watkins K.L."/>
            <person name="Yang Q."/>
            <person name="Yu C."/>
            <person name="Zafar N."/>
            <person name="Zhou L."/>
            <person name="Kuske C.R."/>
        </authorList>
    </citation>
    <scope>NUCLEOTIDE SEQUENCE [LARGE SCALE GENOMIC DNA]</scope>
    <source>
        <strain>Ellin345</strain>
    </source>
</reference>
<sequence>MNPPVEANIRKTALNATHRQSGAKMVDYSGWDMPVEYPSVGGLMKEHLAVRAGVGLFDVSHMGDIRVHGPEALKAVQYLTMNDASKLNTGQAQYSAMLYPNGTFVDDVIVHKFADDDYLLVINAGTREKDVNWVKDNTRQFKVTVEDLSDQFTQIAIQGPKGVDTLQKLTDVDLSKVKFYWFTRGTVAGLKNVLIARTGYTAEDGFEIYIPSDAATSDRVWNELLQAGKEFGVVPAGLGSRNTLRLEGKLPLYGHEISDEINVWEAGLDRFLKMDKGDFIGRAALEKAKNDGVKRALVGLETIERGIPRDGYKVLDLEGKEIGYVTSGSYMPFLKRNLALAYVPVEQSALDNIVAVEIRNQPVKAKVVPSQFYKRPKKSS</sequence>
<accession>Q1INT8</accession>
<organism>
    <name type="scientific">Koribacter versatilis (strain Ellin345)</name>
    <dbReference type="NCBI Taxonomy" id="204669"/>
    <lineage>
        <taxon>Bacteria</taxon>
        <taxon>Pseudomonadati</taxon>
        <taxon>Acidobacteriota</taxon>
        <taxon>Terriglobia</taxon>
        <taxon>Terriglobales</taxon>
        <taxon>Candidatus Korobacteraceae</taxon>
        <taxon>Candidatus Korobacter</taxon>
    </lineage>
</organism>
<keyword id="KW-0032">Aminotransferase</keyword>
<keyword id="KW-1185">Reference proteome</keyword>
<keyword id="KW-0808">Transferase</keyword>
<evidence type="ECO:0000255" key="1">
    <source>
        <dbReference type="HAMAP-Rule" id="MF_00259"/>
    </source>
</evidence>
<feature type="chain" id="PRO_1000125627" description="Aminomethyltransferase">
    <location>
        <begin position="1"/>
        <end position="380"/>
    </location>
</feature>
<protein>
    <recommendedName>
        <fullName evidence="1">Aminomethyltransferase</fullName>
        <ecNumber evidence="1">2.1.2.10</ecNumber>
    </recommendedName>
    <alternativeName>
        <fullName evidence="1">Glycine cleavage system T protein</fullName>
    </alternativeName>
</protein>
<proteinExistence type="inferred from homology"/>